<dbReference type="EMBL" id="EF523496">
    <property type="protein sequence ID" value="ABP63655.1"/>
    <property type="molecule type" value="mRNA"/>
</dbReference>
<dbReference type="SMR" id="A5A3H2"/>
<dbReference type="ArachnoServer" id="AS000022">
    <property type="toxin name" value="omega-hexatoxin-Ar1c"/>
</dbReference>
<dbReference type="GO" id="GO:0005576">
    <property type="term" value="C:extracellular region"/>
    <property type="evidence" value="ECO:0007669"/>
    <property type="project" value="UniProtKB-SubCell"/>
</dbReference>
<dbReference type="GO" id="GO:0019855">
    <property type="term" value="F:calcium channel inhibitor activity"/>
    <property type="evidence" value="ECO:0007669"/>
    <property type="project" value="InterPro"/>
</dbReference>
<dbReference type="GO" id="GO:0017080">
    <property type="term" value="F:sodium channel regulator activity"/>
    <property type="evidence" value="ECO:0007669"/>
    <property type="project" value="UniProtKB-KW"/>
</dbReference>
<dbReference type="GO" id="GO:0090729">
    <property type="term" value="F:toxin activity"/>
    <property type="evidence" value="ECO:0007669"/>
    <property type="project" value="UniProtKB-KW"/>
</dbReference>
<dbReference type="GO" id="GO:0006952">
    <property type="term" value="P:defense response"/>
    <property type="evidence" value="ECO:0007669"/>
    <property type="project" value="InterPro"/>
</dbReference>
<dbReference type="InterPro" id="IPR009415">
    <property type="entry name" value="Omega-atracotox"/>
</dbReference>
<dbReference type="InterPro" id="IPR018071">
    <property type="entry name" value="Omega-atracotox_CS"/>
</dbReference>
<dbReference type="Pfam" id="PF06357">
    <property type="entry name" value="Omega-toxin"/>
    <property type="match status" value="1"/>
</dbReference>
<dbReference type="SUPFAM" id="SSF57059">
    <property type="entry name" value="omega toxin-like"/>
    <property type="match status" value="1"/>
</dbReference>
<dbReference type="PROSITE" id="PS60016">
    <property type="entry name" value="OMEGA_ACTX_1"/>
    <property type="match status" value="1"/>
</dbReference>
<evidence type="ECO:0000250" key="1"/>
<evidence type="ECO:0000250" key="2">
    <source>
        <dbReference type="UniProtKB" id="P56207"/>
    </source>
</evidence>
<evidence type="ECO:0000255" key="3"/>
<evidence type="ECO:0000305" key="4"/>
<feature type="signal peptide" evidence="3">
    <location>
        <begin position="1"/>
        <end position="22"/>
    </location>
</feature>
<feature type="propeptide" id="PRO_0000379910" evidence="1">
    <location>
        <begin position="23"/>
        <end position="41"/>
    </location>
</feature>
<feature type="peptide" id="PRO_0000379911" description="Omega-hexatoxin-Ar1c">
    <location>
        <begin position="42"/>
        <end position="78"/>
    </location>
</feature>
<feature type="site" description="Critical for insecticidal activity" evidence="2">
    <location>
        <position position="51"/>
    </location>
</feature>
<feature type="site" description="Critical for insecticidal activity" evidence="2">
    <location>
        <position position="68"/>
    </location>
</feature>
<feature type="site" description="Critical for insecticidal activity" evidence="2">
    <location>
        <position position="76"/>
    </location>
</feature>
<feature type="disulfide bond" evidence="2">
    <location>
        <begin position="45"/>
        <end position="59"/>
    </location>
</feature>
<feature type="disulfide bond" evidence="2">
    <location>
        <begin position="52"/>
        <end position="63"/>
    </location>
</feature>
<keyword id="KW-0108">Calcium channel impairing toxin</keyword>
<keyword id="KW-0165">Cleavage on pair of basic residues</keyword>
<keyword id="KW-1015">Disulfide bond</keyword>
<keyword id="KW-0872">Ion channel impairing toxin</keyword>
<keyword id="KW-0960">Knottin</keyword>
<keyword id="KW-0528">Neurotoxin</keyword>
<keyword id="KW-0964">Secreted</keyword>
<keyword id="KW-0732">Signal</keyword>
<keyword id="KW-0800">Toxin</keyword>
<keyword id="KW-1218">Voltage-gated calcium channel impairing toxin</keyword>
<keyword id="KW-0738">Voltage-gated sodium channel impairing toxin</keyword>
<protein>
    <recommendedName>
        <fullName>Omega-hexatoxin-Ar1c</fullName>
        <shortName>Omega-HXTX-Ar1c</shortName>
    </recommendedName>
    <alternativeName>
        <fullName>Omega-atracotoxin-Ar1c</fullName>
        <shortName>Omega-ACTX-Ar1c</shortName>
    </alternativeName>
</protein>
<sequence>MNTATGVIALLVLATVIGCIEAEDTRADLQGGEAAEKVFRRSPTCIPSGQPCPYNENYCSQSCTFKENENANTVKRCD</sequence>
<name>TO1C_ATRRO</name>
<reference key="1">
    <citation type="submission" date="2007-04" db="EMBL/GenBank/DDBJ databases">
        <title>The omega-atracotoxins: selective blockers of insect M-LVA and HVA calcium channels.</title>
        <authorList>
            <person name="Sollod B.L."/>
            <person name="Wilson D.T."/>
            <person name="Drinkwater R.D."/>
            <person name="King G.F."/>
        </authorList>
    </citation>
    <scope>NUCLEOTIDE SEQUENCE [MRNA]</scope>
    <source>
        <strain>XenFW137</strain>
        <tissue>Venom gland</tissue>
    </source>
</reference>
<organism>
    <name type="scientific">Atrax robustus</name>
    <name type="common">Sydney funnel-web spider</name>
    <dbReference type="NCBI Taxonomy" id="6903"/>
    <lineage>
        <taxon>Eukaryota</taxon>
        <taxon>Metazoa</taxon>
        <taxon>Ecdysozoa</taxon>
        <taxon>Arthropoda</taxon>
        <taxon>Chelicerata</taxon>
        <taxon>Arachnida</taxon>
        <taxon>Araneae</taxon>
        <taxon>Mygalomorphae</taxon>
        <taxon>Hexathelidae</taxon>
        <taxon>Atrax</taxon>
    </lineage>
</organism>
<proteinExistence type="evidence at transcript level"/>
<accession>A5A3H2</accession>
<comment type="function">
    <text evidence="1">Insecticidal toxin that reversibly and voltage-independently blocks both mid-low- (M-LVA) and high-voltage-activated (HVA) calcium channels (Cav) in cockroach DUM neurons. Also causes a modest block of insect sodium channel currents (Nav). Induces potent excitatory symptoms, followed by flaccid paralysis leading to death in house crickets (By similarity).</text>
</comment>
<comment type="subcellular location">
    <subcellularLocation>
        <location evidence="1">Secreted</location>
    </subcellularLocation>
</comment>
<comment type="tissue specificity">
    <text>Expressed by the venom gland.</text>
</comment>
<comment type="domain">
    <text evidence="1">The presence of a 'disulfide through disulfide knot' structurally defines this protein as a knottin.</text>
</comment>
<comment type="miscellaneous">
    <text>This toxin comes from a male specimen. It is observed that propeptide sequences coming from male specimen are identical but have only limited homology with the female paralogs, but the reason is unknown.</text>
</comment>
<comment type="similarity">
    <text evidence="4">Belongs to the neurotoxin 08 (Shiva) family. 01 (omega toxin) subfamily.</text>
</comment>